<gene>
    <name evidence="1" type="primary">purM</name>
    <name type="ordered locus">LAF_0129</name>
</gene>
<feature type="chain" id="PRO_1000193029" description="Phosphoribosylformylglycinamidine cyclo-ligase">
    <location>
        <begin position="1"/>
        <end position="345"/>
    </location>
</feature>
<accession>B2GF76</accession>
<reference key="1">
    <citation type="journal article" date="2008" name="DNA Res.">
        <title>Comparative genome analysis of Lactobacillus reuteri and Lactobacillus fermentum reveal a genomic island for reuterin and cobalamin production.</title>
        <authorList>
            <person name="Morita H."/>
            <person name="Toh H."/>
            <person name="Fukuda S."/>
            <person name="Horikawa H."/>
            <person name="Oshima K."/>
            <person name="Suzuki T."/>
            <person name="Murakami M."/>
            <person name="Hisamatsu S."/>
            <person name="Kato Y."/>
            <person name="Takizawa T."/>
            <person name="Fukuoka H."/>
            <person name="Yoshimura T."/>
            <person name="Itoh K."/>
            <person name="O'Sullivan D.J."/>
            <person name="McKay L.L."/>
            <person name="Ohno H."/>
            <person name="Kikuchi J."/>
            <person name="Masaoka T."/>
            <person name="Hattori M."/>
        </authorList>
    </citation>
    <scope>NUCLEOTIDE SEQUENCE [LARGE SCALE GENOMIC DNA]</scope>
    <source>
        <strain>NBRC 3956 / LMG 18251</strain>
    </source>
</reference>
<name>PUR5_LIMF3</name>
<protein>
    <recommendedName>
        <fullName evidence="1">Phosphoribosylformylglycinamidine cyclo-ligase</fullName>
        <ecNumber evidence="1">6.3.3.1</ecNumber>
    </recommendedName>
    <alternativeName>
        <fullName evidence="1">AIR synthase</fullName>
    </alternativeName>
    <alternativeName>
        <fullName evidence="1">AIRS</fullName>
    </alternativeName>
    <alternativeName>
        <fullName evidence="1">Phosphoribosyl-aminoimidazole synthetase</fullName>
    </alternativeName>
</protein>
<dbReference type="EC" id="6.3.3.1" evidence="1"/>
<dbReference type="EMBL" id="AP008937">
    <property type="protein sequence ID" value="BAG26465.1"/>
    <property type="molecule type" value="Genomic_DNA"/>
</dbReference>
<dbReference type="RefSeq" id="WP_012390753.1">
    <property type="nucleotide sequence ID" value="NC_010610.1"/>
</dbReference>
<dbReference type="SMR" id="B2GF76"/>
<dbReference type="GeneID" id="83715576"/>
<dbReference type="KEGG" id="lfe:LAF_0129"/>
<dbReference type="eggNOG" id="COG0150">
    <property type="taxonomic scope" value="Bacteria"/>
</dbReference>
<dbReference type="HOGENOM" id="CLU_047116_0_0_9"/>
<dbReference type="UniPathway" id="UPA00074">
    <property type="reaction ID" value="UER00129"/>
</dbReference>
<dbReference type="Proteomes" id="UP000001697">
    <property type="component" value="Chromosome"/>
</dbReference>
<dbReference type="GO" id="GO:0005829">
    <property type="term" value="C:cytosol"/>
    <property type="evidence" value="ECO:0007669"/>
    <property type="project" value="TreeGrafter"/>
</dbReference>
<dbReference type="GO" id="GO:0005524">
    <property type="term" value="F:ATP binding"/>
    <property type="evidence" value="ECO:0007669"/>
    <property type="project" value="UniProtKB-KW"/>
</dbReference>
<dbReference type="GO" id="GO:0004637">
    <property type="term" value="F:phosphoribosylamine-glycine ligase activity"/>
    <property type="evidence" value="ECO:0007669"/>
    <property type="project" value="TreeGrafter"/>
</dbReference>
<dbReference type="GO" id="GO:0004641">
    <property type="term" value="F:phosphoribosylformylglycinamidine cyclo-ligase activity"/>
    <property type="evidence" value="ECO:0007669"/>
    <property type="project" value="UniProtKB-UniRule"/>
</dbReference>
<dbReference type="GO" id="GO:0006189">
    <property type="term" value="P:'de novo' IMP biosynthetic process"/>
    <property type="evidence" value="ECO:0007669"/>
    <property type="project" value="UniProtKB-UniRule"/>
</dbReference>
<dbReference type="GO" id="GO:0046084">
    <property type="term" value="P:adenine biosynthetic process"/>
    <property type="evidence" value="ECO:0007669"/>
    <property type="project" value="TreeGrafter"/>
</dbReference>
<dbReference type="CDD" id="cd02196">
    <property type="entry name" value="PurM"/>
    <property type="match status" value="1"/>
</dbReference>
<dbReference type="FunFam" id="3.30.1330.10:FF:000001">
    <property type="entry name" value="Phosphoribosylformylglycinamidine cyclo-ligase"/>
    <property type="match status" value="1"/>
</dbReference>
<dbReference type="FunFam" id="3.90.650.10:FF:000011">
    <property type="entry name" value="Phosphoribosylformylglycinamidine cyclo-ligase"/>
    <property type="match status" value="1"/>
</dbReference>
<dbReference type="Gene3D" id="3.90.650.10">
    <property type="entry name" value="PurM-like C-terminal domain"/>
    <property type="match status" value="1"/>
</dbReference>
<dbReference type="Gene3D" id="3.30.1330.10">
    <property type="entry name" value="PurM-like, N-terminal domain"/>
    <property type="match status" value="1"/>
</dbReference>
<dbReference type="HAMAP" id="MF_00741">
    <property type="entry name" value="AIRS"/>
    <property type="match status" value="1"/>
</dbReference>
<dbReference type="InterPro" id="IPR010918">
    <property type="entry name" value="PurM-like_C_dom"/>
</dbReference>
<dbReference type="InterPro" id="IPR036676">
    <property type="entry name" value="PurM-like_C_sf"/>
</dbReference>
<dbReference type="InterPro" id="IPR016188">
    <property type="entry name" value="PurM-like_N"/>
</dbReference>
<dbReference type="InterPro" id="IPR036921">
    <property type="entry name" value="PurM-like_N_sf"/>
</dbReference>
<dbReference type="InterPro" id="IPR004733">
    <property type="entry name" value="PurM_cligase"/>
</dbReference>
<dbReference type="NCBIfam" id="TIGR00878">
    <property type="entry name" value="purM"/>
    <property type="match status" value="1"/>
</dbReference>
<dbReference type="PANTHER" id="PTHR10520:SF12">
    <property type="entry name" value="TRIFUNCTIONAL PURINE BIOSYNTHETIC PROTEIN ADENOSINE-3"/>
    <property type="match status" value="1"/>
</dbReference>
<dbReference type="PANTHER" id="PTHR10520">
    <property type="entry name" value="TRIFUNCTIONAL PURINE BIOSYNTHETIC PROTEIN ADENOSINE-3-RELATED"/>
    <property type="match status" value="1"/>
</dbReference>
<dbReference type="Pfam" id="PF00586">
    <property type="entry name" value="AIRS"/>
    <property type="match status" value="1"/>
</dbReference>
<dbReference type="Pfam" id="PF02769">
    <property type="entry name" value="AIRS_C"/>
    <property type="match status" value="1"/>
</dbReference>
<dbReference type="SUPFAM" id="SSF56042">
    <property type="entry name" value="PurM C-terminal domain-like"/>
    <property type="match status" value="1"/>
</dbReference>
<dbReference type="SUPFAM" id="SSF55326">
    <property type="entry name" value="PurM N-terminal domain-like"/>
    <property type="match status" value="1"/>
</dbReference>
<comment type="catalytic activity">
    <reaction evidence="1">
        <text>2-formamido-N(1)-(5-O-phospho-beta-D-ribosyl)acetamidine + ATP = 5-amino-1-(5-phospho-beta-D-ribosyl)imidazole + ADP + phosphate + H(+)</text>
        <dbReference type="Rhea" id="RHEA:23032"/>
        <dbReference type="ChEBI" id="CHEBI:15378"/>
        <dbReference type="ChEBI" id="CHEBI:30616"/>
        <dbReference type="ChEBI" id="CHEBI:43474"/>
        <dbReference type="ChEBI" id="CHEBI:137981"/>
        <dbReference type="ChEBI" id="CHEBI:147287"/>
        <dbReference type="ChEBI" id="CHEBI:456216"/>
        <dbReference type="EC" id="6.3.3.1"/>
    </reaction>
</comment>
<comment type="pathway">
    <text evidence="1">Purine metabolism; IMP biosynthesis via de novo pathway; 5-amino-1-(5-phospho-D-ribosyl)imidazole from N(2)-formyl-N(1)-(5-phospho-D-ribosyl)glycinamide: step 2/2.</text>
</comment>
<comment type="subcellular location">
    <subcellularLocation>
        <location evidence="1">Cytoplasm</location>
    </subcellularLocation>
</comment>
<comment type="similarity">
    <text evidence="1">Belongs to the AIR synthase family.</text>
</comment>
<evidence type="ECO:0000255" key="1">
    <source>
        <dbReference type="HAMAP-Rule" id="MF_00741"/>
    </source>
</evidence>
<sequence length="345" mass="36521">MNRYQEAGVDVNAGYELVKRIKENVKSTNRPGALGGIGAFGGLFDLGELKVKHPVLVSGTDGVGTKLLIAKAMDQHDTIGIDVVAMCVNDVLAQGAEPLYFLDYIATGHNDPAKMADIVAGVAEGCRQAGAALIGGETAEMPDMYDQDEYDLAGTVTGVVEKDDLLTSDQPQAGAILLGLASSGIHSNGFSLVRQILFKDHQVDLAATPAKLGGQTVGQAVLAPTKIYVKPVLPLLKDHLVEGVAHITGGGLIENLPRMFGDDLQAQVDSSAWPSLPVFDYLKELGGLSDDDCWQTFNMGLGMILAVQPDLVDQVKSRLNQAGEACYQVGQLVNRPAGEEKIVIK</sequence>
<proteinExistence type="inferred from homology"/>
<organism>
    <name type="scientific">Limosilactobacillus fermentum (strain NBRC 3956 / LMG 18251)</name>
    <name type="common">Lactobacillus fermentum</name>
    <dbReference type="NCBI Taxonomy" id="334390"/>
    <lineage>
        <taxon>Bacteria</taxon>
        <taxon>Bacillati</taxon>
        <taxon>Bacillota</taxon>
        <taxon>Bacilli</taxon>
        <taxon>Lactobacillales</taxon>
        <taxon>Lactobacillaceae</taxon>
        <taxon>Limosilactobacillus</taxon>
    </lineage>
</organism>
<keyword id="KW-0067">ATP-binding</keyword>
<keyword id="KW-0963">Cytoplasm</keyword>
<keyword id="KW-0436">Ligase</keyword>
<keyword id="KW-0547">Nucleotide-binding</keyword>
<keyword id="KW-0658">Purine biosynthesis</keyword>
<keyword id="KW-1185">Reference proteome</keyword>